<accession>P0DN78</accession>
<evidence type="ECO:0000250" key="1">
    <source>
        <dbReference type="UniProtKB" id="P04001"/>
    </source>
</evidence>
<evidence type="ECO:0000255" key="2"/>
<evidence type="ECO:0000255" key="3">
    <source>
        <dbReference type="PROSITE-ProRule" id="PRU00498"/>
    </source>
</evidence>
<evidence type="ECO:0000255" key="4">
    <source>
        <dbReference type="PROSITE-ProRule" id="PRU00521"/>
    </source>
</evidence>
<evidence type="ECO:0000256" key="5">
    <source>
        <dbReference type="SAM" id="MobiDB-lite"/>
    </source>
</evidence>
<evidence type="ECO:0000305" key="6"/>
<evidence type="ECO:0000312" key="7">
    <source>
        <dbReference type="HGNC" id="HGNC:51831"/>
    </source>
</evidence>
<protein>
    <recommendedName>
        <fullName>Medium-wave-sensitive opsin 3</fullName>
    </recommendedName>
    <alternativeName>
        <fullName>Green cone photoreceptor pigment</fullName>
    </alternativeName>
    <alternativeName>
        <fullName>Green-sensitive opsin</fullName>
        <shortName>GOP</shortName>
    </alternativeName>
    <alternativeName>
        <fullName evidence="7">opsin 1 cone pigments medium-wave-sensitive 3</fullName>
    </alternativeName>
</protein>
<organism>
    <name type="scientific">Homo sapiens</name>
    <name type="common">Human</name>
    <dbReference type="NCBI Taxonomy" id="9606"/>
    <lineage>
        <taxon>Eukaryota</taxon>
        <taxon>Metazoa</taxon>
        <taxon>Chordata</taxon>
        <taxon>Craniata</taxon>
        <taxon>Vertebrata</taxon>
        <taxon>Euteleostomi</taxon>
        <taxon>Mammalia</taxon>
        <taxon>Eutheria</taxon>
        <taxon>Euarchontoglires</taxon>
        <taxon>Primates</taxon>
        <taxon>Haplorrhini</taxon>
        <taxon>Catarrhini</taxon>
        <taxon>Hominidae</taxon>
        <taxon>Homo</taxon>
    </lineage>
</organism>
<keyword id="KW-1003">Cell membrane</keyword>
<keyword id="KW-0157">Chromophore</keyword>
<keyword id="KW-1015">Disulfide bond</keyword>
<keyword id="KW-0297">G-protein coupled receptor</keyword>
<keyword id="KW-0325">Glycoprotein</keyword>
<keyword id="KW-0472">Membrane</keyword>
<keyword id="KW-0597">Phosphoprotein</keyword>
<keyword id="KW-0600">Photoreceptor protein</keyword>
<keyword id="KW-0675">Receptor</keyword>
<keyword id="KW-1185">Reference proteome</keyword>
<keyword id="KW-0681">Retinal protein</keyword>
<keyword id="KW-0716">Sensory transduction</keyword>
<keyword id="KW-0807">Transducer</keyword>
<keyword id="KW-0812">Transmembrane</keyword>
<keyword id="KW-1133">Transmembrane helix</keyword>
<keyword id="KW-0844">Vision</keyword>
<proteinExistence type="inferred from homology"/>
<sequence>MAQQWSLQRLAGRHPQDSYEDSTQSSIFTYTNSNSTRGPFEGPNYHIAPRWVYHLTSVWMIFVVIASVFTNGLVLAATMKFKKLRHPLNWILVNLAVADLAETVIASTISVVNQVYGYFVLGHPMCVLEGYTVSLCGITGLWSLAIISWERWMVVCKPFGNVRFDAKLAIVGIAFSWIWAAVWTAPPIFGWSRYWPHGLKTSCGPDVFSGSSYPGVQSYMIVLMVTCCITPLSIIVLCYLQVWLAIRAVAKQQKESESTQKAEKEVTRMVVVMVLAFCFCWGPYAFFACFAAANPGYPFHPLMAALPAFFAKSATIYNPVIYVFMNRQFRNCILQLFGKKVDDGSELSSASKTEVSSVSSVSPA</sequence>
<comment type="function">
    <text evidence="1">Visual pigments are the light-absorbing molecules that mediate vision. They consist of an apoprotein, opsin, covalently linked to cis-retinal.</text>
</comment>
<comment type="subcellular location">
    <subcellularLocation>
        <location evidence="1">Cell membrane</location>
        <topology evidence="2">Multi-pass membrane protein</topology>
    </subcellularLocation>
</comment>
<comment type="PTM">
    <text evidence="1">N-glycosylated. O-glycosylated.</text>
</comment>
<comment type="PTM">
    <text evidence="1">Phosphorylated on some or all of the serine and threonine residues present in the C-terminal region.</text>
</comment>
<comment type="similarity">
    <text evidence="4">Belongs to the G-protein coupled receptor 1 family. Opsin subfamily.</text>
</comment>
<comment type="caution">
    <text evidence="6">Medium-wave-sensitive opsin genes vary in number among individuals and, together with a single red pigment gene, reside in a head-to-tail tandem array within the X chromosome. In the GRCh38 reference genome assembly, there are 3 genes in tandem coding for identical proteins AC P04001, AC P0DN77 and P0DN78.</text>
</comment>
<reference key="1">
    <citation type="journal article" date="2005" name="Nature">
        <title>The DNA sequence of the human X chromosome.</title>
        <authorList>
            <person name="Ross M.T."/>
            <person name="Grafham D.V."/>
            <person name="Coffey A.J."/>
            <person name="Scherer S."/>
            <person name="McLay K."/>
            <person name="Muzny D."/>
            <person name="Platzer M."/>
            <person name="Howell G.R."/>
            <person name="Burrows C."/>
            <person name="Bird C.P."/>
            <person name="Frankish A."/>
            <person name="Lovell F.L."/>
            <person name="Howe K.L."/>
            <person name="Ashurst J.L."/>
            <person name="Fulton R.S."/>
            <person name="Sudbrak R."/>
            <person name="Wen G."/>
            <person name="Jones M.C."/>
            <person name="Hurles M.E."/>
            <person name="Andrews T.D."/>
            <person name="Scott C.E."/>
            <person name="Searle S."/>
            <person name="Ramser J."/>
            <person name="Whittaker A."/>
            <person name="Deadman R."/>
            <person name="Carter N.P."/>
            <person name="Hunt S.E."/>
            <person name="Chen R."/>
            <person name="Cree A."/>
            <person name="Gunaratne P."/>
            <person name="Havlak P."/>
            <person name="Hodgson A."/>
            <person name="Metzker M.L."/>
            <person name="Richards S."/>
            <person name="Scott G."/>
            <person name="Steffen D."/>
            <person name="Sodergren E."/>
            <person name="Wheeler D.A."/>
            <person name="Worley K.C."/>
            <person name="Ainscough R."/>
            <person name="Ambrose K.D."/>
            <person name="Ansari-Lari M.A."/>
            <person name="Aradhya S."/>
            <person name="Ashwell R.I."/>
            <person name="Babbage A.K."/>
            <person name="Bagguley C.L."/>
            <person name="Ballabio A."/>
            <person name="Banerjee R."/>
            <person name="Barker G.E."/>
            <person name="Barlow K.F."/>
            <person name="Barrett I.P."/>
            <person name="Bates K.N."/>
            <person name="Beare D.M."/>
            <person name="Beasley H."/>
            <person name="Beasley O."/>
            <person name="Beck A."/>
            <person name="Bethel G."/>
            <person name="Blechschmidt K."/>
            <person name="Brady N."/>
            <person name="Bray-Allen S."/>
            <person name="Bridgeman A.M."/>
            <person name="Brown A.J."/>
            <person name="Brown M.J."/>
            <person name="Bonnin D."/>
            <person name="Bruford E.A."/>
            <person name="Buhay C."/>
            <person name="Burch P."/>
            <person name="Burford D."/>
            <person name="Burgess J."/>
            <person name="Burrill W."/>
            <person name="Burton J."/>
            <person name="Bye J.M."/>
            <person name="Carder C."/>
            <person name="Carrel L."/>
            <person name="Chako J."/>
            <person name="Chapman J.C."/>
            <person name="Chavez D."/>
            <person name="Chen E."/>
            <person name="Chen G."/>
            <person name="Chen Y."/>
            <person name="Chen Z."/>
            <person name="Chinault C."/>
            <person name="Ciccodicola A."/>
            <person name="Clark S.Y."/>
            <person name="Clarke G."/>
            <person name="Clee C.M."/>
            <person name="Clegg S."/>
            <person name="Clerc-Blankenburg K."/>
            <person name="Clifford K."/>
            <person name="Cobley V."/>
            <person name="Cole C.G."/>
            <person name="Conquer J.S."/>
            <person name="Corby N."/>
            <person name="Connor R.E."/>
            <person name="David R."/>
            <person name="Davies J."/>
            <person name="Davis C."/>
            <person name="Davis J."/>
            <person name="Delgado O."/>
            <person name="Deshazo D."/>
            <person name="Dhami P."/>
            <person name="Ding Y."/>
            <person name="Dinh H."/>
            <person name="Dodsworth S."/>
            <person name="Draper H."/>
            <person name="Dugan-Rocha S."/>
            <person name="Dunham A."/>
            <person name="Dunn M."/>
            <person name="Durbin K.J."/>
            <person name="Dutta I."/>
            <person name="Eades T."/>
            <person name="Ellwood M."/>
            <person name="Emery-Cohen A."/>
            <person name="Errington H."/>
            <person name="Evans K.L."/>
            <person name="Faulkner L."/>
            <person name="Francis F."/>
            <person name="Frankland J."/>
            <person name="Fraser A.E."/>
            <person name="Galgoczy P."/>
            <person name="Gilbert J."/>
            <person name="Gill R."/>
            <person name="Gloeckner G."/>
            <person name="Gregory S.G."/>
            <person name="Gribble S."/>
            <person name="Griffiths C."/>
            <person name="Grocock R."/>
            <person name="Gu Y."/>
            <person name="Gwilliam R."/>
            <person name="Hamilton C."/>
            <person name="Hart E.A."/>
            <person name="Hawes A."/>
            <person name="Heath P.D."/>
            <person name="Heitmann K."/>
            <person name="Hennig S."/>
            <person name="Hernandez J."/>
            <person name="Hinzmann B."/>
            <person name="Ho S."/>
            <person name="Hoffs M."/>
            <person name="Howden P.J."/>
            <person name="Huckle E.J."/>
            <person name="Hume J."/>
            <person name="Hunt P.J."/>
            <person name="Hunt A.R."/>
            <person name="Isherwood J."/>
            <person name="Jacob L."/>
            <person name="Johnson D."/>
            <person name="Jones S."/>
            <person name="de Jong P.J."/>
            <person name="Joseph S.S."/>
            <person name="Keenan S."/>
            <person name="Kelly S."/>
            <person name="Kershaw J.K."/>
            <person name="Khan Z."/>
            <person name="Kioschis P."/>
            <person name="Klages S."/>
            <person name="Knights A.J."/>
            <person name="Kosiura A."/>
            <person name="Kovar-Smith C."/>
            <person name="Laird G.K."/>
            <person name="Langford C."/>
            <person name="Lawlor S."/>
            <person name="Leversha M."/>
            <person name="Lewis L."/>
            <person name="Liu W."/>
            <person name="Lloyd C."/>
            <person name="Lloyd D.M."/>
            <person name="Loulseged H."/>
            <person name="Loveland J.E."/>
            <person name="Lovell J.D."/>
            <person name="Lozado R."/>
            <person name="Lu J."/>
            <person name="Lyne R."/>
            <person name="Ma J."/>
            <person name="Maheshwari M."/>
            <person name="Matthews L.H."/>
            <person name="McDowall J."/>
            <person name="McLaren S."/>
            <person name="McMurray A."/>
            <person name="Meidl P."/>
            <person name="Meitinger T."/>
            <person name="Milne S."/>
            <person name="Miner G."/>
            <person name="Mistry S.L."/>
            <person name="Morgan M."/>
            <person name="Morris S."/>
            <person name="Mueller I."/>
            <person name="Mullikin J.C."/>
            <person name="Nguyen N."/>
            <person name="Nordsiek G."/>
            <person name="Nyakatura G."/>
            <person name="O'dell C.N."/>
            <person name="Okwuonu G."/>
            <person name="Palmer S."/>
            <person name="Pandian R."/>
            <person name="Parker D."/>
            <person name="Parrish J."/>
            <person name="Pasternak S."/>
            <person name="Patel D."/>
            <person name="Pearce A.V."/>
            <person name="Pearson D.M."/>
            <person name="Pelan S.E."/>
            <person name="Perez L."/>
            <person name="Porter K.M."/>
            <person name="Ramsey Y."/>
            <person name="Reichwald K."/>
            <person name="Rhodes S."/>
            <person name="Ridler K.A."/>
            <person name="Schlessinger D."/>
            <person name="Schueler M.G."/>
            <person name="Sehra H.K."/>
            <person name="Shaw-Smith C."/>
            <person name="Shen H."/>
            <person name="Sheridan E.M."/>
            <person name="Shownkeen R."/>
            <person name="Skuce C.D."/>
            <person name="Smith M.L."/>
            <person name="Sotheran E.C."/>
            <person name="Steingruber H.E."/>
            <person name="Steward C.A."/>
            <person name="Storey R."/>
            <person name="Swann R.M."/>
            <person name="Swarbreck D."/>
            <person name="Tabor P.E."/>
            <person name="Taudien S."/>
            <person name="Taylor T."/>
            <person name="Teague B."/>
            <person name="Thomas K."/>
            <person name="Thorpe A."/>
            <person name="Timms K."/>
            <person name="Tracey A."/>
            <person name="Trevanion S."/>
            <person name="Tromans A.C."/>
            <person name="d'Urso M."/>
            <person name="Verduzco D."/>
            <person name="Villasana D."/>
            <person name="Waldron L."/>
            <person name="Wall M."/>
            <person name="Wang Q."/>
            <person name="Warren J."/>
            <person name="Warry G.L."/>
            <person name="Wei X."/>
            <person name="West A."/>
            <person name="Whitehead S.L."/>
            <person name="Whiteley M.N."/>
            <person name="Wilkinson J.E."/>
            <person name="Willey D.L."/>
            <person name="Williams G."/>
            <person name="Williams L."/>
            <person name="Williamson A."/>
            <person name="Williamson H."/>
            <person name="Wilming L."/>
            <person name="Woodmansey R.L."/>
            <person name="Wray P.W."/>
            <person name="Yen J."/>
            <person name="Zhang J."/>
            <person name="Zhou J."/>
            <person name="Zoghbi H."/>
            <person name="Zorilla S."/>
            <person name="Buck D."/>
            <person name="Reinhardt R."/>
            <person name="Poustka A."/>
            <person name="Rosenthal A."/>
            <person name="Lehrach H."/>
            <person name="Meindl A."/>
            <person name="Minx P.J."/>
            <person name="Hillier L.W."/>
            <person name="Willard H.F."/>
            <person name="Wilson R.K."/>
            <person name="Waterston R.H."/>
            <person name="Rice C.M."/>
            <person name="Vaudin M."/>
            <person name="Coulson A."/>
            <person name="Nelson D.L."/>
            <person name="Weinstock G."/>
            <person name="Sulston J.E."/>
            <person name="Durbin R.M."/>
            <person name="Hubbard T."/>
            <person name="Gibbs R.A."/>
            <person name="Beck S."/>
            <person name="Rogers J."/>
            <person name="Bentley D.R."/>
        </authorList>
    </citation>
    <scope>NUCLEOTIDE SEQUENCE [LARGE SCALE GENOMIC DNA]</scope>
</reference>
<feature type="chain" id="PRO_0000435401" description="Medium-wave-sensitive opsin 3">
    <location>
        <begin position="1"/>
        <end position="364"/>
    </location>
</feature>
<feature type="topological domain" description="Extracellular" evidence="6">
    <location>
        <begin position="1"/>
        <end position="52"/>
    </location>
</feature>
<feature type="transmembrane region" description="Helical; Name=1" evidence="2">
    <location>
        <begin position="53"/>
        <end position="77"/>
    </location>
</feature>
<feature type="topological domain" description="Cytoplasmic" evidence="6">
    <location>
        <begin position="78"/>
        <end position="89"/>
    </location>
</feature>
<feature type="transmembrane region" description="Helical; Name=2" evidence="2">
    <location>
        <begin position="90"/>
        <end position="115"/>
    </location>
</feature>
<feature type="topological domain" description="Extracellular" evidence="6">
    <location>
        <begin position="116"/>
        <end position="129"/>
    </location>
</feature>
<feature type="transmembrane region" description="Helical; Name=3" evidence="2">
    <location>
        <begin position="130"/>
        <end position="149"/>
    </location>
</feature>
<feature type="topological domain" description="Cytoplasmic" evidence="6">
    <location>
        <begin position="150"/>
        <end position="168"/>
    </location>
</feature>
<feature type="transmembrane region" description="Helical; Name=4" evidence="2">
    <location>
        <begin position="169"/>
        <end position="192"/>
    </location>
</feature>
<feature type="topological domain" description="Extracellular" evidence="6">
    <location>
        <begin position="193"/>
        <end position="218"/>
    </location>
</feature>
<feature type="transmembrane region" description="Helical; Name=5" evidence="2">
    <location>
        <begin position="219"/>
        <end position="246"/>
    </location>
</feature>
<feature type="topological domain" description="Cytoplasmic" evidence="6">
    <location>
        <begin position="247"/>
        <end position="268"/>
    </location>
</feature>
<feature type="transmembrane region" description="Helical; Name=6" evidence="2">
    <location>
        <begin position="269"/>
        <end position="292"/>
    </location>
</feature>
<feature type="topological domain" description="Extracellular" evidence="6">
    <location>
        <begin position="293"/>
        <end position="300"/>
    </location>
</feature>
<feature type="transmembrane region" description="Helical; Name=7" evidence="2">
    <location>
        <begin position="301"/>
        <end position="325"/>
    </location>
</feature>
<feature type="topological domain" description="Cytoplasmic" evidence="6">
    <location>
        <begin position="326"/>
        <end position="364"/>
    </location>
</feature>
<feature type="region of interest" description="Disordered" evidence="5">
    <location>
        <begin position="1"/>
        <end position="23"/>
    </location>
</feature>
<feature type="region of interest" description="Required for 11-cis-retinal regeneration" evidence="1">
    <location>
        <begin position="17"/>
        <end position="43"/>
    </location>
</feature>
<feature type="modified residue" description="N6-(retinylidene)lysine" evidence="1">
    <location>
        <position position="312"/>
    </location>
</feature>
<feature type="glycosylation site" description="N-linked (GlcNAc...) asparagine" evidence="3">
    <location>
        <position position="34"/>
    </location>
</feature>
<feature type="disulfide bond" evidence="4">
    <location>
        <begin position="126"/>
        <end position="203"/>
    </location>
</feature>
<dbReference type="EMBL" id="AC245140">
    <property type="status" value="NOT_ANNOTATED_CDS"/>
    <property type="molecule type" value="Genomic_DNA"/>
</dbReference>
<dbReference type="CCDS" id="CCDS83509.1"/>
<dbReference type="RefSeq" id="NP_001316996.1">
    <property type="nucleotide sequence ID" value="NM_001330067.2"/>
</dbReference>
<dbReference type="RefSeq" id="XP_016855469.1">
    <property type="nucleotide sequence ID" value="XM_016999980.1"/>
</dbReference>
<dbReference type="SMR" id="P0DN78"/>
<dbReference type="FunCoup" id="P0DN78">
    <property type="interactions" value="180"/>
</dbReference>
<dbReference type="GlyCosmos" id="P0DN78">
    <property type="glycosylation" value="1 site, No reported glycans"/>
</dbReference>
<dbReference type="GlyGen" id="P0DN78">
    <property type="glycosylation" value="1 site"/>
</dbReference>
<dbReference type="BioMuta" id="OPN1MW3"/>
<dbReference type="MassIVE" id="P0DN78"/>
<dbReference type="Antibodypedia" id="72294">
    <property type="antibodies" value="15 antibodies from 5 providers"/>
</dbReference>
<dbReference type="DNASU" id="2652"/>
<dbReference type="Ensembl" id="ENST00000599405.4">
    <property type="protein sequence ID" value="ENSP00000469970.1"/>
    <property type="gene ID" value="ENSG00000269433.4"/>
</dbReference>
<dbReference type="GeneID" id="101060233"/>
<dbReference type="KEGG" id="hsa:101060233"/>
<dbReference type="KEGG" id="hsa:2652"/>
<dbReference type="KEGG" id="hsa:728458"/>
<dbReference type="MANE-Select" id="ENST00000599405.4">
    <property type="protein sequence ID" value="ENSP00000469970.1"/>
    <property type="RefSeq nucleotide sequence ID" value="NM_001330067.2"/>
    <property type="RefSeq protein sequence ID" value="NP_001316996.1"/>
</dbReference>
<dbReference type="AGR" id="HGNC:26952"/>
<dbReference type="AGR" id="HGNC:4206"/>
<dbReference type="AGR" id="HGNC:51831"/>
<dbReference type="CTD" id="101060233"/>
<dbReference type="CTD" id="2652"/>
<dbReference type="CTD" id="728458"/>
<dbReference type="DisGeNET" id="101060233"/>
<dbReference type="DisGeNET" id="2652"/>
<dbReference type="DisGeNET" id="728458"/>
<dbReference type="GeneCards" id="OPN1MW3"/>
<dbReference type="HGNC" id="HGNC:51831">
    <property type="gene designation" value="OPN1MW3"/>
</dbReference>
<dbReference type="HPA" id="ENSG00000269433">
    <property type="expression patterns" value="Tissue enriched (retina)"/>
</dbReference>
<dbReference type="neXtProt" id="NX_P0DN78"/>
<dbReference type="OpenTargets" id="ENSG00000268221"/>
<dbReference type="VEuPathDB" id="HostDB:ENSG00000269433"/>
<dbReference type="GeneTree" id="ENSGT01030000234549"/>
<dbReference type="InParanoid" id="P0DN78"/>
<dbReference type="OMA" id="YNITTVW"/>
<dbReference type="OrthoDB" id="8545112at2759"/>
<dbReference type="PAN-GO" id="P0DN78">
    <property type="GO annotations" value="6 GO annotations based on evolutionary models"/>
</dbReference>
<dbReference type="PhylomeDB" id="P0DN78"/>
<dbReference type="PathwayCommons" id="P0DN78"/>
<dbReference type="SignaLink" id="P0DN78"/>
<dbReference type="BioGRID-ORCS" id="101060233">
    <property type="hits" value="1 hit in 6 CRISPR screens"/>
</dbReference>
<dbReference type="BioGRID-ORCS" id="2652">
    <property type="hits" value="7 hits in 250 CRISPR screens"/>
</dbReference>
<dbReference type="BioGRID-ORCS" id="728458">
    <property type="hits" value="4 hits in 254 CRISPR screens"/>
</dbReference>
<dbReference type="ChiTaRS" id="OPN1MW3">
    <property type="organism name" value="human"/>
</dbReference>
<dbReference type="Pharos" id="P0DN78">
    <property type="development level" value="Tdark"/>
</dbReference>
<dbReference type="PRO" id="PR:P0DN78"/>
<dbReference type="Proteomes" id="UP000005640">
    <property type="component" value="Chromosome X"/>
</dbReference>
<dbReference type="RNAct" id="P0DN78">
    <property type="molecule type" value="protein"/>
</dbReference>
<dbReference type="Bgee" id="ENSG00000269433">
    <property type="expression patterns" value="Expressed in blood"/>
</dbReference>
<dbReference type="GO" id="GO:0097381">
    <property type="term" value="C:photoreceptor disc membrane"/>
    <property type="evidence" value="ECO:0007669"/>
    <property type="project" value="UniProtKB-ARBA"/>
</dbReference>
<dbReference type="GO" id="GO:0001750">
    <property type="term" value="C:photoreceptor outer segment"/>
    <property type="evidence" value="ECO:0000318"/>
    <property type="project" value="GO_Central"/>
</dbReference>
<dbReference type="GO" id="GO:0005886">
    <property type="term" value="C:plasma membrane"/>
    <property type="evidence" value="ECO:0000318"/>
    <property type="project" value="GO_Central"/>
</dbReference>
<dbReference type="GO" id="GO:0008020">
    <property type="term" value="F:G protein-coupled photoreceptor activity"/>
    <property type="evidence" value="ECO:0000318"/>
    <property type="project" value="GO_Central"/>
</dbReference>
<dbReference type="GO" id="GO:0071482">
    <property type="term" value="P:cellular response to light stimulus"/>
    <property type="evidence" value="ECO:0000318"/>
    <property type="project" value="GO_Central"/>
</dbReference>
<dbReference type="GO" id="GO:0007186">
    <property type="term" value="P:G protein-coupled receptor signaling pathway"/>
    <property type="evidence" value="ECO:0000318"/>
    <property type="project" value="GO_Central"/>
</dbReference>
<dbReference type="GO" id="GO:0007602">
    <property type="term" value="P:phototransduction"/>
    <property type="evidence" value="ECO:0000318"/>
    <property type="project" value="GO_Central"/>
</dbReference>
<dbReference type="GO" id="GO:0007601">
    <property type="term" value="P:visual perception"/>
    <property type="evidence" value="ECO:0007669"/>
    <property type="project" value="UniProtKB-KW"/>
</dbReference>
<dbReference type="FunFam" id="1.20.1070.10:FF:000090">
    <property type="entry name" value="Long-wave-sensitive opsin 1"/>
    <property type="match status" value="1"/>
</dbReference>
<dbReference type="Gene3D" id="1.20.1070.10">
    <property type="entry name" value="Rhodopsin 7-helix transmembrane proteins"/>
    <property type="match status" value="1"/>
</dbReference>
<dbReference type="InterPro" id="IPR050125">
    <property type="entry name" value="GPCR_opsins"/>
</dbReference>
<dbReference type="InterPro" id="IPR000276">
    <property type="entry name" value="GPCR_Rhodpsn"/>
</dbReference>
<dbReference type="InterPro" id="IPR017452">
    <property type="entry name" value="GPCR_Rhodpsn_7TM"/>
</dbReference>
<dbReference type="InterPro" id="IPR001760">
    <property type="entry name" value="Opsin"/>
</dbReference>
<dbReference type="InterPro" id="IPR000378">
    <property type="entry name" value="Opsin_red/grn"/>
</dbReference>
<dbReference type="InterPro" id="IPR027430">
    <property type="entry name" value="Retinal_BS"/>
</dbReference>
<dbReference type="PANTHER" id="PTHR24240">
    <property type="entry name" value="OPSIN"/>
    <property type="match status" value="1"/>
</dbReference>
<dbReference type="Pfam" id="PF00001">
    <property type="entry name" value="7tm_1"/>
    <property type="match status" value="1"/>
</dbReference>
<dbReference type="PRINTS" id="PR00237">
    <property type="entry name" value="GPCRRHODOPSN"/>
</dbReference>
<dbReference type="PRINTS" id="PR00238">
    <property type="entry name" value="OPSIN"/>
</dbReference>
<dbReference type="PRINTS" id="PR00575">
    <property type="entry name" value="OPSINREDGRN"/>
</dbReference>
<dbReference type="SMART" id="SM01381">
    <property type="entry name" value="7TM_GPCR_Srsx"/>
    <property type="match status" value="1"/>
</dbReference>
<dbReference type="SUPFAM" id="SSF81321">
    <property type="entry name" value="Family A G protein-coupled receptor-like"/>
    <property type="match status" value="1"/>
</dbReference>
<dbReference type="PROSITE" id="PS00237">
    <property type="entry name" value="G_PROTEIN_RECEP_F1_1"/>
    <property type="match status" value="1"/>
</dbReference>
<dbReference type="PROSITE" id="PS50262">
    <property type="entry name" value="G_PROTEIN_RECEP_F1_2"/>
    <property type="match status" value="1"/>
</dbReference>
<dbReference type="PROSITE" id="PS00238">
    <property type="entry name" value="OPSIN"/>
    <property type="match status" value="1"/>
</dbReference>
<gene>
    <name evidence="7" type="primary">OPN1MW3</name>
</gene>
<name>OPSG3_HUMAN</name>